<proteinExistence type="evidence at protein level"/>
<accession>Q8N7R1</accession>
<accession>Q8NDI9</accession>
<feature type="chain" id="PRO_0000348453" description="POM121-like protein 12">
    <location>
        <begin position="1"/>
        <end position="296"/>
    </location>
</feature>
<feature type="region of interest" description="Disordered" evidence="1">
    <location>
        <begin position="1"/>
        <end position="54"/>
    </location>
</feature>
<feature type="region of interest" description="Disordered" evidence="1">
    <location>
        <begin position="142"/>
        <end position="162"/>
    </location>
</feature>
<feature type="compositionally biased region" description="Low complexity" evidence="1">
    <location>
        <begin position="34"/>
        <end position="52"/>
    </location>
</feature>
<feature type="sequence variant" id="VAR_046180" description="In dbSNP:rs10229800.">
    <original>P</original>
    <variation>T</variation>
    <location>
        <position position="21"/>
    </location>
</feature>
<feature type="sequence variant" id="VAR_046181" description="In dbSNP:rs11238247." evidence="2">
    <original>Q</original>
    <variation>E</variation>
    <location>
        <position position="64"/>
    </location>
</feature>
<feature type="sequence variant" id="VAR_046182" description="In dbSNP:rs1689291.">
    <original>G</original>
    <variation>E</variation>
    <location>
        <position position="188"/>
    </location>
</feature>
<feature type="sequence conflict" description="In Ref. 3; CAD38744." evidence="3" ref="3">
    <original>P</original>
    <variation>S</variation>
    <location>
        <position position="144"/>
    </location>
</feature>
<name>P1L12_HUMAN</name>
<protein>
    <recommendedName>
        <fullName>POM121-like protein 12</fullName>
    </recommendedName>
</protein>
<reference key="1">
    <citation type="journal article" date="2004" name="Nat. Genet.">
        <title>Complete sequencing and characterization of 21,243 full-length human cDNAs.</title>
        <authorList>
            <person name="Ota T."/>
            <person name="Suzuki Y."/>
            <person name="Nishikawa T."/>
            <person name="Otsuki T."/>
            <person name="Sugiyama T."/>
            <person name="Irie R."/>
            <person name="Wakamatsu A."/>
            <person name="Hayashi K."/>
            <person name="Sato H."/>
            <person name="Nagai K."/>
            <person name="Kimura K."/>
            <person name="Makita H."/>
            <person name="Sekine M."/>
            <person name="Obayashi M."/>
            <person name="Nishi T."/>
            <person name="Shibahara T."/>
            <person name="Tanaka T."/>
            <person name="Ishii S."/>
            <person name="Yamamoto J."/>
            <person name="Saito K."/>
            <person name="Kawai Y."/>
            <person name="Isono Y."/>
            <person name="Nakamura Y."/>
            <person name="Nagahari K."/>
            <person name="Murakami K."/>
            <person name="Yasuda T."/>
            <person name="Iwayanagi T."/>
            <person name="Wagatsuma M."/>
            <person name="Shiratori A."/>
            <person name="Sudo H."/>
            <person name="Hosoiri T."/>
            <person name="Kaku Y."/>
            <person name="Kodaira H."/>
            <person name="Kondo H."/>
            <person name="Sugawara M."/>
            <person name="Takahashi M."/>
            <person name="Kanda K."/>
            <person name="Yokoi T."/>
            <person name="Furuya T."/>
            <person name="Kikkawa E."/>
            <person name="Omura Y."/>
            <person name="Abe K."/>
            <person name="Kamihara K."/>
            <person name="Katsuta N."/>
            <person name="Sato K."/>
            <person name="Tanikawa M."/>
            <person name="Yamazaki M."/>
            <person name="Ninomiya K."/>
            <person name="Ishibashi T."/>
            <person name="Yamashita H."/>
            <person name="Murakawa K."/>
            <person name="Fujimori K."/>
            <person name="Tanai H."/>
            <person name="Kimata M."/>
            <person name="Watanabe M."/>
            <person name="Hiraoka S."/>
            <person name="Chiba Y."/>
            <person name="Ishida S."/>
            <person name="Ono Y."/>
            <person name="Takiguchi S."/>
            <person name="Watanabe S."/>
            <person name="Yosida M."/>
            <person name="Hotuta T."/>
            <person name="Kusano J."/>
            <person name="Kanehori K."/>
            <person name="Takahashi-Fujii A."/>
            <person name="Hara H."/>
            <person name="Tanase T.-O."/>
            <person name="Nomura Y."/>
            <person name="Togiya S."/>
            <person name="Komai F."/>
            <person name="Hara R."/>
            <person name="Takeuchi K."/>
            <person name="Arita M."/>
            <person name="Imose N."/>
            <person name="Musashino K."/>
            <person name="Yuuki H."/>
            <person name="Oshima A."/>
            <person name="Sasaki N."/>
            <person name="Aotsuka S."/>
            <person name="Yoshikawa Y."/>
            <person name="Matsunawa H."/>
            <person name="Ichihara T."/>
            <person name="Shiohata N."/>
            <person name="Sano S."/>
            <person name="Moriya S."/>
            <person name="Momiyama H."/>
            <person name="Satoh N."/>
            <person name="Takami S."/>
            <person name="Terashima Y."/>
            <person name="Suzuki O."/>
            <person name="Nakagawa S."/>
            <person name="Senoh A."/>
            <person name="Mizoguchi H."/>
            <person name="Goto Y."/>
            <person name="Shimizu F."/>
            <person name="Wakebe H."/>
            <person name="Hishigaki H."/>
            <person name="Watanabe T."/>
            <person name="Sugiyama A."/>
            <person name="Takemoto M."/>
            <person name="Kawakami B."/>
            <person name="Yamazaki M."/>
            <person name="Watanabe K."/>
            <person name="Kumagai A."/>
            <person name="Itakura S."/>
            <person name="Fukuzumi Y."/>
            <person name="Fujimori Y."/>
            <person name="Komiyama M."/>
            <person name="Tashiro H."/>
            <person name="Tanigami A."/>
            <person name="Fujiwara T."/>
            <person name="Ono T."/>
            <person name="Yamada K."/>
            <person name="Fujii Y."/>
            <person name="Ozaki K."/>
            <person name="Hirao M."/>
            <person name="Ohmori Y."/>
            <person name="Kawabata A."/>
            <person name="Hikiji T."/>
            <person name="Kobatake N."/>
            <person name="Inagaki H."/>
            <person name="Ikema Y."/>
            <person name="Okamoto S."/>
            <person name="Okitani R."/>
            <person name="Kawakami T."/>
            <person name="Noguchi S."/>
            <person name="Itoh T."/>
            <person name="Shigeta K."/>
            <person name="Senba T."/>
            <person name="Matsumura K."/>
            <person name="Nakajima Y."/>
            <person name="Mizuno T."/>
            <person name="Morinaga M."/>
            <person name="Sasaki M."/>
            <person name="Togashi T."/>
            <person name="Oyama M."/>
            <person name="Hata H."/>
            <person name="Watanabe M."/>
            <person name="Komatsu T."/>
            <person name="Mizushima-Sugano J."/>
            <person name="Satoh T."/>
            <person name="Shirai Y."/>
            <person name="Takahashi Y."/>
            <person name="Nakagawa K."/>
            <person name="Okumura K."/>
            <person name="Nagase T."/>
            <person name="Nomura N."/>
            <person name="Kikuchi H."/>
            <person name="Masuho Y."/>
            <person name="Yamashita R."/>
            <person name="Nakai K."/>
            <person name="Yada T."/>
            <person name="Nakamura Y."/>
            <person name="Ohara O."/>
            <person name="Isogai T."/>
            <person name="Sugano S."/>
        </authorList>
    </citation>
    <scope>NUCLEOTIDE SEQUENCE [LARGE SCALE MRNA]</scope>
    <scope>VARIANT GLU-64</scope>
    <source>
        <tissue>Testis</tissue>
    </source>
</reference>
<reference key="2">
    <citation type="journal article" date="2003" name="Nature">
        <title>The DNA sequence of human chromosome 7.</title>
        <authorList>
            <person name="Hillier L.W."/>
            <person name="Fulton R.S."/>
            <person name="Fulton L.A."/>
            <person name="Graves T.A."/>
            <person name="Pepin K.H."/>
            <person name="Wagner-McPherson C."/>
            <person name="Layman D."/>
            <person name="Maas J."/>
            <person name="Jaeger S."/>
            <person name="Walker R."/>
            <person name="Wylie K."/>
            <person name="Sekhon M."/>
            <person name="Becker M.C."/>
            <person name="O'Laughlin M.D."/>
            <person name="Schaller M.E."/>
            <person name="Fewell G.A."/>
            <person name="Delehaunty K.D."/>
            <person name="Miner T.L."/>
            <person name="Nash W.E."/>
            <person name="Cordes M."/>
            <person name="Du H."/>
            <person name="Sun H."/>
            <person name="Edwards J."/>
            <person name="Bradshaw-Cordum H."/>
            <person name="Ali J."/>
            <person name="Andrews S."/>
            <person name="Isak A."/>
            <person name="Vanbrunt A."/>
            <person name="Nguyen C."/>
            <person name="Du F."/>
            <person name="Lamar B."/>
            <person name="Courtney L."/>
            <person name="Kalicki J."/>
            <person name="Ozersky P."/>
            <person name="Bielicki L."/>
            <person name="Scott K."/>
            <person name="Holmes A."/>
            <person name="Harkins R."/>
            <person name="Harris A."/>
            <person name="Strong C.M."/>
            <person name="Hou S."/>
            <person name="Tomlinson C."/>
            <person name="Dauphin-Kohlberg S."/>
            <person name="Kozlowicz-Reilly A."/>
            <person name="Leonard S."/>
            <person name="Rohlfing T."/>
            <person name="Rock S.M."/>
            <person name="Tin-Wollam A.-M."/>
            <person name="Abbott A."/>
            <person name="Minx P."/>
            <person name="Maupin R."/>
            <person name="Strowmatt C."/>
            <person name="Latreille P."/>
            <person name="Miller N."/>
            <person name="Johnson D."/>
            <person name="Murray J."/>
            <person name="Woessner J.P."/>
            <person name="Wendl M.C."/>
            <person name="Yang S.-P."/>
            <person name="Schultz B.R."/>
            <person name="Wallis J.W."/>
            <person name="Spieth J."/>
            <person name="Bieri T.A."/>
            <person name="Nelson J.O."/>
            <person name="Berkowicz N."/>
            <person name="Wohldmann P.E."/>
            <person name="Cook L.L."/>
            <person name="Hickenbotham M.T."/>
            <person name="Eldred J."/>
            <person name="Williams D."/>
            <person name="Bedell J.A."/>
            <person name="Mardis E.R."/>
            <person name="Clifton S.W."/>
            <person name="Chissoe S.L."/>
            <person name="Marra M.A."/>
            <person name="Raymond C."/>
            <person name="Haugen E."/>
            <person name="Gillett W."/>
            <person name="Zhou Y."/>
            <person name="James R."/>
            <person name="Phelps K."/>
            <person name="Iadanoto S."/>
            <person name="Bubb K."/>
            <person name="Simms E."/>
            <person name="Levy R."/>
            <person name="Clendenning J."/>
            <person name="Kaul R."/>
            <person name="Kent W.J."/>
            <person name="Furey T.S."/>
            <person name="Baertsch R.A."/>
            <person name="Brent M.R."/>
            <person name="Keibler E."/>
            <person name="Flicek P."/>
            <person name="Bork P."/>
            <person name="Suyama M."/>
            <person name="Bailey J.A."/>
            <person name="Portnoy M.E."/>
            <person name="Torrents D."/>
            <person name="Chinwalla A.T."/>
            <person name="Gish W.R."/>
            <person name="Eddy S.R."/>
            <person name="McPherson J.D."/>
            <person name="Olson M.V."/>
            <person name="Eichler E.E."/>
            <person name="Green E.D."/>
            <person name="Waterston R.H."/>
            <person name="Wilson R.K."/>
        </authorList>
    </citation>
    <scope>NUCLEOTIDE SEQUENCE [LARGE SCALE GENOMIC DNA]</scope>
</reference>
<reference key="3">
    <citation type="journal article" date="2007" name="BMC Genomics">
        <title>The full-ORF clone resource of the German cDNA consortium.</title>
        <authorList>
            <person name="Bechtel S."/>
            <person name="Rosenfelder H."/>
            <person name="Duda A."/>
            <person name="Schmidt C.P."/>
            <person name="Ernst U."/>
            <person name="Wellenreuther R."/>
            <person name="Mehrle A."/>
            <person name="Schuster C."/>
            <person name="Bahr A."/>
            <person name="Bloecker H."/>
            <person name="Heubner D."/>
            <person name="Hoerlein A."/>
            <person name="Michel G."/>
            <person name="Wedler H."/>
            <person name="Koehrer K."/>
            <person name="Ottenwaelder B."/>
            <person name="Poustka A."/>
            <person name="Wiemann S."/>
            <person name="Schupp I."/>
        </authorList>
    </citation>
    <scope>NUCLEOTIDE SEQUENCE [LARGE SCALE MRNA] OF 115-296</scope>
    <source>
        <tissue>Brain</tissue>
    </source>
</reference>
<dbReference type="EMBL" id="AK097768">
    <property type="protein sequence ID" value="BAC05166.1"/>
    <property type="status" value="ALT_INIT"/>
    <property type="molecule type" value="mRNA"/>
</dbReference>
<dbReference type="EMBL" id="AC074397">
    <property type="status" value="NOT_ANNOTATED_CDS"/>
    <property type="molecule type" value="Genomic_DNA"/>
</dbReference>
<dbReference type="EMBL" id="AL833888">
    <property type="protein sequence ID" value="CAD38744.1"/>
    <property type="status" value="ALT_SEQ"/>
    <property type="molecule type" value="mRNA"/>
</dbReference>
<dbReference type="CCDS" id="CCDS43584.1"/>
<dbReference type="RefSeq" id="NP_872401.3">
    <property type="nucleotide sequence ID" value="NM_182595.4"/>
</dbReference>
<dbReference type="BioGRID" id="130237">
    <property type="interactions" value="1"/>
</dbReference>
<dbReference type="IntAct" id="Q8N7R1">
    <property type="interactions" value="1"/>
</dbReference>
<dbReference type="MINT" id="Q8N7R1"/>
<dbReference type="STRING" id="9606.ENSP00000386133"/>
<dbReference type="iPTMnet" id="Q8N7R1"/>
<dbReference type="PhosphoSitePlus" id="Q8N7R1"/>
<dbReference type="BioMuta" id="POM121L12"/>
<dbReference type="DMDM" id="327478566"/>
<dbReference type="MassIVE" id="Q8N7R1"/>
<dbReference type="PaxDb" id="9606-ENSP00000386133"/>
<dbReference type="PeptideAtlas" id="Q8N7R1"/>
<dbReference type="Antibodypedia" id="52280">
    <property type="antibodies" value="5 antibodies from 5 providers"/>
</dbReference>
<dbReference type="DNASU" id="285877"/>
<dbReference type="Ensembl" id="ENST00000408890.6">
    <property type="protein sequence ID" value="ENSP00000386133.3"/>
    <property type="gene ID" value="ENSG00000221900.6"/>
</dbReference>
<dbReference type="GeneID" id="285877"/>
<dbReference type="KEGG" id="hsa:285877"/>
<dbReference type="MANE-Select" id="ENST00000408890.6">
    <property type="protein sequence ID" value="ENSP00000386133.3"/>
    <property type="RefSeq nucleotide sequence ID" value="NM_182595.4"/>
    <property type="RefSeq protein sequence ID" value="NP_872401.3"/>
</dbReference>
<dbReference type="UCSC" id="uc003tpz.4">
    <property type="organism name" value="human"/>
</dbReference>
<dbReference type="AGR" id="HGNC:25369"/>
<dbReference type="CTD" id="285877"/>
<dbReference type="GeneCards" id="POM121L12"/>
<dbReference type="HGNC" id="HGNC:25369">
    <property type="gene designation" value="POM121L12"/>
</dbReference>
<dbReference type="HPA" id="ENSG00000221900">
    <property type="expression patterns" value="Tissue enriched (testis)"/>
</dbReference>
<dbReference type="neXtProt" id="NX_Q8N7R1"/>
<dbReference type="OpenTargets" id="ENSG00000221900"/>
<dbReference type="VEuPathDB" id="HostDB:ENSG00000221900"/>
<dbReference type="eggNOG" id="ENOG502RWWF">
    <property type="taxonomic scope" value="Eukaryota"/>
</dbReference>
<dbReference type="GeneTree" id="ENSGT00940000153253"/>
<dbReference type="HOGENOM" id="CLU_080461_0_0_1"/>
<dbReference type="InParanoid" id="Q8N7R1"/>
<dbReference type="OMA" id="CAWEGCM"/>
<dbReference type="OrthoDB" id="9482075at2759"/>
<dbReference type="PAN-GO" id="Q8N7R1">
    <property type="GO annotations" value="5 GO annotations based on evolutionary models"/>
</dbReference>
<dbReference type="PhylomeDB" id="Q8N7R1"/>
<dbReference type="PathwayCommons" id="Q8N7R1"/>
<dbReference type="SignaLink" id="Q8N7R1"/>
<dbReference type="BioGRID-ORCS" id="285877">
    <property type="hits" value="13 hits in 1140 CRISPR screens"/>
</dbReference>
<dbReference type="ChiTaRS" id="POM121L12">
    <property type="organism name" value="human"/>
</dbReference>
<dbReference type="GenomeRNAi" id="285877"/>
<dbReference type="Pharos" id="Q8N7R1">
    <property type="development level" value="Tdark"/>
</dbReference>
<dbReference type="PRO" id="PR:Q8N7R1"/>
<dbReference type="Proteomes" id="UP000005640">
    <property type="component" value="Chromosome 7"/>
</dbReference>
<dbReference type="RNAct" id="Q8N7R1">
    <property type="molecule type" value="protein"/>
</dbReference>
<dbReference type="Bgee" id="ENSG00000221900">
    <property type="expression patterns" value="Expressed in left testis and 10 other cell types or tissues"/>
</dbReference>
<dbReference type="Pfam" id="PF15229">
    <property type="entry name" value="POM121"/>
    <property type="match status" value="1"/>
</dbReference>
<gene>
    <name type="primary">POM121L12</name>
</gene>
<evidence type="ECO:0000256" key="1">
    <source>
        <dbReference type="SAM" id="MobiDB-lite"/>
    </source>
</evidence>
<evidence type="ECO:0000269" key="2">
    <source>
    </source>
</evidence>
<evidence type="ECO:0000305" key="3"/>
<sequence length="296" mass="31848">MGAAAPAESADLGNFWKAGEPLLQGPDALAAPMSRSPSTPQTTPSPQGRQSPWPLRSLTQSHIQYFQWGRPVPSTHLIEVRPTQDPAKPQRVVSEGWRRPALPGETALGRDLSCAWEGCMKGGLCRAWNPGRTWSPVTIGIAPPERQESPWRSPGQRARPAGRPAAQELLDPCTRETLLGALSQCPKGSARFDGPLWFEVSDSKGGRRNLQPRPSAFKPLSKNGAVASFVPRPGPLKPSLGPWSLSFCDDAWPSVLVQPAPSAIWDFWEATTPSCGSCSRVSFALEVTQSAGPFGS</sequence>
<comment type="similarity">
    <text evidence="3">Belongs to the POM121 family.</text>
</comment>
<comment type="sequence caution" evidence="3">
    <conflict type="erroneous initiation">
        <sequence resource="EMBL-CDS" id="BAC05166"/>
    </conflict>
    <text>Extended N-terminus.</text>
</comment>
<comment type="sequence caution" evidence="3">
    <conflict type="miscellaneous discrepancy">
        <sequence resource="EMBL-CDS" id="CAD38744"/>
    </conflict>
    <text>Contaminating sequence.</text>
</comment>
<keyword id="KW-1267">Proteomics identification</keyword>
<keyword id="KW-1185">Reference proteome</keyword>
<organism>
    <name type="scientific">Homo sapiens</name>
    <name type="common">Human</name>
    <dbReference type="NCBI Taxonomy" id="9606"/>
    <lineage>
        <taxon>Eukaryota</taxon>
        <taxon>Metazoa</taxon>
        <taxon>Chordata</taxon>
        <taxon>Craniata</taxon>
        <taxon>Vertebrata</taxon>
        <taxon>Euteleostomi</taxon>
        <taxon>Mammalia</taxon>
        <taxon>Eutheria</taxon>
        <taxon>Euarchontoglires</taxon>
        <taxon>Primates</taxon>
        <taxon>Haplorrhini</taxon>
        <taxon>Catarrhini</taxon>
        <taxon>Hominidae</taxon>
        <taxon>Homo</taxon>
    </lineage>
</organism>